<proteinExistence type="inferred from homology"/>
<comment type="function">
    <text evidence="1">Required for small ribosomal subunit (SSU) synthesis. Has a role in the processing of early nucleolar and late cytoplasmic pre-RNA species (By similarity).</text>
</comment>
<comment type="subunit">
    <text evidence="1">Component of the small ribosomal subunit, ribosomal RNA processing complex (SSU RRP complex).</text>
</comment>
<comment type="subcellular location">
    <subcellularLocation>
        <location evidence="2">Cytoplasm</location>
    </subcellularLocation>
    <subcellularLocation>
        <location evidence="2">Nucleus</location>
        <location evidence="2">Nucleolus</location>
    </subcellularLocation>
</comment>
<comment type="similarity">
    <text evidence="4">Belongs to the PNO1 family.</text>
</comment>
<sequence length="258" mass="28524">MPAPTALRAASDASTTETPIAPHAQEHDEEILIDVQPSNNADDVLASANSAEDTDMRIDLEGRPVFTPAKDTPAAYRVETRKVPVPPHRMTPLKANWPKIYPPLVEHLKLQVRINIKSRAVELRTSKFTTDTGALQKGEDFVKAFTLGFDIDDAIALLRLDDLYIRSFEIRDVKASLNGEHLSRAIGRIAGKDGRTRHAIENASRTRIVIADQKIHILGRFQNINAGQEAVVSLILGAPPGKVYGNLRKVAARMKERF</sequence>
<evidence type="ECO:0000250" key="1"/>
<evidence type="ECO:0000250" key="2">
    <source>
        <dbReference type="UniProtKB" id="Q99216"/>
    </source>
</evidence>
<evidence type="ECO:0000256" key="3">
    <source>
        <dbReference type="SAM" id="MobiDB-lite"/>
    </source>
</evidence>
<evidence type="ECO:0000305" key="4"/>
<name>PNO1_EMENI</name>
<feature type="chain" id="PRO_0000278370" description="Pre-rRNA-processing protein pno1">
    <location>
        <begin position="1"/>
        <end position="258"/>
    </location>
</feature>
<feature type="domain" description="KH">
    <location>
        <begin position="179"/>
        <end position="231"/>
    </location>
</feature>
<feature type="region of interest" description="Disordered" evidence="3">
    <location>
        <begin position="1"/>
        <end position="26"/>
    </location>
</feature>
<gene>
    <name type="primary">pno1</name>
    <name type="ORF">AN5785</name>
</gene>
<keyword id="KW-0963">Cytoplasm</keyword>
<keyword id="KW-0539">Nucleus</keyword>
<keyword id="KW-1185">Reference proteome</keyword>
<keyword id="KW-0690">Ribosome biogenesis</keyword>
<keyword id="KW-0694">RNA-binding</keyword>
<reference key="1">
    <citation type="journal article" date="2005" name="Nature">
        <title>Sequencing of Aspergillus nidulans and comparative analysis with A. fumigatus and A. oryzae.</title>
        <authorList>
            <person name="Galagan J.E."/>
            <person name="Calvo S.E."/>
            <person name="Cuomo C."/>
            <person name="Ma L.-J."/>
            <person name="Wortman J.R."/>
            <person name="Batzoglou S."/>
            <person name="Lee S.-I."/>
            <person name="Bastuerkmen M."/>
            <person name="Spevak C.C."/>
            <person name="Clutterbuck J."/>
            <person name="Kapitonov V."/>
            <person name="Jurka J."/>
            <person name="Scazzocchio C."/>
            <person name="Farman M.L."/>
            <person name="Butler J."/>
            <person name="Purcell S."/>
            <person name="Harris S."/>
            <person name="Braus G.H."/>
            <person name="Draht O."/>
            <person name="Busch S."/>
            <person name="D'Enfert C."/>
            <person name="Bouchier C."/>
            <person name="Goldman G.H."/>
            <person name="Bell-Pedersen D."/>
            <person name="Griffiths-Jones S."/>
            <person name="Doonan J.H."/>
            <person name="Yu J."/>
            <person name="Vienken K."/>
            <person name="Pain A."/>
            <person name="Freitag M."/>
            <person name="Selker E.U."/>
            <person name="Archer D.B."/>
            <person name="Penalva M.A."/>
            <person name="Oakley B.R."/>
            <person name="Momany M."/>
            <person name="Tanaka T."/>
            <person name="Kumagai T."/>
            <person name="Asai K."/>
            <person name="Machida M."/>
            <person name="Nierman W.C."/>
            <person name="Denning D.W."/>
            <person name="Caddick M.X."/>
            <person name="Hynes M."/>
            <person name="Paoletti M."/>
            <person name="Fischer R."/>
            <person name="Miller B.L."/>
            <person name="Dyer P.S."/>
            <person name="Sachs M.S."/>
            <person name="Osmani S.A."/>
            <person name="Birren B.W."/>
        </authorList>
    </citation>
    <scope>NUCLEOTIDE SEQUENCE [LARGE SCALE GENOMIC DNA]</scope>
    <source>
        <strain>FGSC A4 / ATCC 38163 / CBS 112.46 / NRRL 194 / M139</strain>
    </source>
</reference>
<reference key="2">
    <citation type="journal article" date="2009" name="Fungal Genet. Biol.">
        <title>The 2008 update of the Aspergillus nidulans genome annotation: a community effort.</title>
        <authorList>
            <person name="Wortman J.R."/>
            <person name="Gilsenan J.M."/>
            <person name="Joardar V."/>
            <person name="Deegan J."/>
            <person name="Clutterbuck J."/>
            <person name="Andersen M.R."/>
            <person name="Archer D."/>
            <person name="Bencina M."/>
            <person name="Braus G."/>
            <person name="Coutinho P."/>
            <person name="von Dohren H."/>
            <person name="Doonan J."/>
            <person name="Driessen A.J."/>
            <person name="Durek P."/>
            <person name="Espeso E."/>
            <person name="Fekete E."/>
            <person name="Flipphi M."/>
            <person name="Estrada C.G."/>
            <person name="Geysens S."/>
            <person name="Goldman G."/>
            <person name="de Groot P.W."/>
            <person name="Hansen K."/>
            <person name="Harris S.D."/>
            <person name="Heinekamp T."/>
            <person name="Helmstaedt K."/>
            <person name="Henrissat B."/>
            <person name="Hofmann G."/>
            <person name="Homan T."/>
            <person name="Horio T."/>
            <person name="Horiuchi H."/>
            <person name="James S."/>
            <person name="Jones M."/>
            <person name="Karaffa L."/>
            <person name="Karanyi Z."/>
            <person name="Kato M."/>
            <person name="Keller N."/>
            <person name="Kelly D.E."/>
            <person name="Kiel J.A."/>
            <person name="Kim J.M."/>
            <person name="van der Klei I.J."/>
            <person name="Klis F.M."/>
            <person name="Kovalchuk A."/>
            <person name="Krasevec N."/>
            <person name="Kubicek C.P."/>
            <person name="Liu B."/>
            <person name="Maccabe A."/>
            <person name="Meyer V."/>
            <person name="Mirabito P."/>
            <person name="Miskei M."/>
            <person name="Mos M."/>
            <person name="Mullins J."/>
            <person name="Nelson D.R."/>
            <person name="Nielsen J."/>
            <person name="Oakley B.R."/>
            <person name="Osmani S.A."/>
            <person name="Pakula T."/>
            <person name="Paszewski A."/>
            <person name="Paulsen I."/>
            <person name="Pilsyk S."/>
            <person name="Pocsi I."/>
            <person name="Punt P.J."/>
            <person name="Ram A.F."/>
            <person name="Ren Q."/>
            <person name="Robellet X."/>
            <person name="Robson G."/>
            <person name="Seiboth B."/>
            <person name="van Solingen P."/>
            <person name="Specht T."/>
            <person name="Sun J."/>
            <person name="Taheri-Talesh N."/>
            <person name="Takeshita N."/>
            <person name="Ussery D."/>
            <person name="vanKuyk P.A."/>
            <person name="Visser H."/>
            <person name="van de Vondervoort P.J."/>
            <person name="de Vries R.P."/>
            <person name="Walton J."/>
            <person name="Xiang X."/>
            <person name="Xiong Y."/>
            <person name="Zeng A.P."/>
            <person name="Brandt B.W."/>
            <person name="Cornell M.J."/>
            <person name="van den Hondel C.A."/>
            <person name="Visser J."/>
            <person name="Oliver S.G."/>
            <person name="Turner G."/>
        </authorList>
    </citation>
    <scope>GENOME REANNOTATION</scope>
    <source>
        <strain>FGSC A4 / ATCC 38163 / CBS 112.46 / NRRL 194 / M139</strain>
    </source>
</reference>
<dbReference type="EMBL" id="AACD01000098">
    <property type="protein sequence ID" value="EAA62878.1"/>
    <property type="molecule type" value="Genomic_DNA"/>
</dbReference>
<dbReference type="EMBL" id="BN001305">
    <property type="protein sequence ID" value="CBF81194.1"/>
    <property type="molecule type" value="Genomic_DNA"/>
</dbReference>
<dbReference type="RefSeq" id="XP_663389.1">
    <property type="nucleotide sequence ID" value="XM_658297.1"/>
</dbReference>
<dbReference type="SMR" id="Q5B0Z5"/>
<dbReference type="FunCoup" id="Q5B0Z5">
    <property type="interactions" value="884"/>
</dbReference>
<dbReference type="STRING" id="227321.Q5B0Z5"/>
<dbReference type="EnsemblFungi" id="CBF81194">
    <property type="protein sequence ID" value="CBF81194"/>
    <property type="gene ID" value="ANIA_05785"/>
</dbReference>
<dbReference type="KEGG" id="ani:ANIA_05785"/>
<dbReference type="VEuPathDB" id="FungiDB:AN5785"/>
<dbReference type="eggNOG" id="KOG3273">
    <property type="taxonomic scope" value="Eukaryota"/>
</dbReference>
<dbReference type="HOGENOM" id="CLU_064992_0_2_1"/>
<dbReference type="InParanoid" id="Q5B0Z5"/>
<dbReference type="OMA" id="TPLRNNW"/>
<dbReference type="OrthoDB" id="1932641at2759"/>
<dbReference type="Proteomes" id="UP000000560">
    <property type="component" value="Chromosome V"/>
</dbReference>
<dbReference type="GO" id="GO:0005737">
    <property type="term" value="C:cytoplasm"/>
    <property type="evidence" value="ECO:0007669"/>
    <property type="project" value="UniProtKB-SubCell"/>
</dbReference>
<dbReference type="GO" id="GO:0005730">
    <property type="term" value="C:nucleolus"/>
    <property type="evidence" value="ECO:0007669"/>
    <property type="project" value="UniProtKB-SubCell"/>
</dbReference>
<dbReference type="GO" id="GO:0005634">
    <property type="term" value="C:nucleus"/>
    <property type="evidence" value="ECO:0000318"/>
    <property type="project" value="GO_Central"/>
</dbReference>
<dbReference type="GO" id="GO:0042134">
    <property type="term" value="F:rRNA primary transcript binding"/>
    <property type="evidence" value="ECO:0007669"/>
    <property type="project" value="EnsemblFungi"/>
</dbReference>
<dbReference type="GO" id="GO:0051082">
    <property type="term" value="F:unfolded protein binding"/>
    <property type="evidence" value="ECO:0007669"/>
    <property type="project" value="EnsemblFungi"/>
</dbReference>
<dbReference type="GO" id="GO:0000447">
    <property type="term" value="P:endonucleolytic cleavage in ITS1 to separate SSU-rRNA from 5.8S rRNA and LSU-rRNA from tricistronic rRNA transcript (SSU-rRNA, 5.8S rRNA, LSU-rRNA)"/>
    <property type="evidence" value="ECO:0007669"/>
    <property type="project" value="EnsemblFungi"/>
</dbReference>
<dbReference type="GO" id="GO:0000472">
    <property type="term" value="P:endonucleolytic cleavage to generate mature 5'-end of SSU-rRNA from (SSU-rRNA, 5.8S rRNA, LSU-rRNA)"/>
    <property type="evidence" value="ECO:0007669"/>
    <property type="project" value="EnsemblFungi"/>
</dbReference>
<dbReference type="GO" id="GO:0043248">
    <property type="term" value="P:proteasome assembly"/>
    <property type="evidence" value="ECO:0007669"/>
    <property type="project" value="EnsemblFungi"/>
</dbReference>
<dbReference type="GO" id="GO:0000056">
    <property type="term" value="P:ribosomal small subunit export from nucleus"/>
    <property type="evidence" value="ECO:0007669"/>
    <property type="project" value="EnsemblFungi"/>
</dbReference>
<dbReference type="GO" id="GO:0042255">
    <property type="term" value="P:ribosome assembly"/>
    <property type="evidence" value="ECO:0007669"/>
    <property type="project" value="EnsemblFungi"/>
</dbReference>
<dbReference type="CDD" id="cd22391">
    <property type="entry name" value="KH-I_PNO1_rpt1"/>
    <property type="match status" value="1"/>
</dbReference>
<dbReference type="CDD" id="cd22392">
    <property type="entry name" value="KH-I_PNO1_rpt2"/>
    <property type="match status" value="1"/>
</dbReference>
<dbReference type="FunFam" id="3.30.1370.10:FF:000009">
    <property type="entry name" value="RNA-binding protein PNO1"/>
    <property type="match status" value="1"/>
</dbReference>
<dbReference type="FunFam" id="3.30.1370.10:FF:000048">
    <property type="entry name" value="RNA-binding protein PNO1 isoform X2"/>
    <property type="match status" value="1"/>
</dbReference>
<dbReference type="Gene3D" id="3.30.1370.10">
    <property type="entry name" value="K Homology domain, type 1"/>
    <property type="match status" value="1"/>
</dbReference>
<dbReference type="InterPro" id="IPR055212">
    <property type="entry name" value="KH-I_PNO1_first"/>
</dbReference>
<dbReference type="InterPro" id="IPR004087">
    <property type="entry name" value="KH_dom"/>
</dbReference>
<dbReference type="InterPro" id="IPR036612">
    <property type="entry name" value="KH_dom_type_1_sf"/>
</dbReference>
<dbReference type="InterPro" id="IPR055211">
    <property type="entry name" value="KH_PNO1_2nd"/>
</dbReference>
<dbReference type="PANTHER" id="PTHR12826">
    <property type="entry name" value="RIBONUCLEASE Y"/>
    <property type="match status" value="1"/>
</dbReference>
<dbReference type="PANTHER" id="PTHR12826:SF13">
    <property type="entry name" value="RNA-BINDING PROTEIN PNO1"/>
    <property type="match status" value="1"/>
</dbReference>
<dbReference type="Pfam" id="PF22891">
    <property type="entry name" value="KH_PNO1_2nd"/>
    <property type="match status" value="1"/>
</dbReference>
<dbReference type="SMART" id="SM00322">
    <property type="entry name" value="KH"/>
    <property type="match status" value="1"/>
</dbReference>
<dbReference type="SUPFAM" id="SSF54791">
    <property type="entry name" value="Eukaryotic type KH-domain (KH-domain type I)"/>
    <property type="match status" value="1"/>
</dbReference>
<organism>
    <name type="scientific">Emericella nidulans (strain FGSC A4 / ATCC 38163 / CBS 112.46 / NRRL 194 / M139)</name>
    <name type="common">Aspergillus nidulans</name>
    <dbReference type="NCBI Taxonomy" id="227321"/>
    <lineage>
        <taxon>Eukaryota</taxon>
        <taxon>Fungi</taxon>
        <taxon>Dikarya</taxon>
        <taxon>Ascomycota</taxon>
        <taxon>Pezizomycotina</taxon>
        <taxon>Eurotiomycetes</taxon>
        <taxon>Eurotiomycetidae</taxon>
        <taxon>Eurotiales</taxon>
        <taxon>Aspergillaceae</taxon>
        <taxon>Aspergillus</taxon>
        <taxon>Aspergillus subgen. Nidulantes</taxon>
    </lineage>
</organism>
<accession>Q5B0Z5</accession>
<accession>C8VFE3</accession>
<protein>
    <recommendedName>
        <fullName>Pre-rRNA-processing protein pno1</fullName>
    </recommendedName>
</protein>